<evidence type="ECO:0000255" key="1"/>
<evidence type="ECO:0000255" key="2">
    <source>
        <dbReference type="PROSITE-ProRule" id="PRU00175"/>
    </source>
</evidence>
<evidence type="ECO:0000269" key="3">
    <source>
    </source>
</evidence>
<evidence type="ECO:0000269" key="4">
    <source>
    </source>
</evidence>
<evidence type="ECO:0000303" key="5">
    <source>
    </source>
</evidence>
<evidence type="ECO:0000305" key="6"/>
<evidence type="ECO:0000305" key="7">
    <source>
    </source>
</evidence>
<evidence type="ECO:0000312" key="8">
    <source>
        <dbReference type="FlyBase" id="FBgn0086916"/>
    </source>
</evidence>
<evidence type="ECO:0000312" key="9">
    <source>
        <dbReference type="Proteomes" id="UP000000803"/>
    </source>
</evidence>
<dbReference type="EMBL" id="AE014296">
    <property type="protein sequence ID" value="AAF49838.3"/>
    <property type="molecule type" value="Genomic_DNA"/>
</dbReference>
<dbReference type="RefSeq" id="NP_648633.2">
    <property type="nucleotide sequence ID" value="NM_140376.2"/>
</dbReference>
<dbReference type="FunCoup" id="Q9VU52">
    <property type="interactions" value="3"/>
</dbReference>
<dbReference type="STRING" id="7227.FBpp0306188"/>
<dbReference type="GlyGen" id="Q9VU52">
    <property type="glycosylation" value="1 site"/>
</dbReference>
<dbReference type="PaxDb" id="7227-FBpp0306188"/>
<dbReference type="EnsemblMetazoa" id="FBtr0334063">
    <property type="protein sequence ID" value="FBpp0306188"/>
    <property type="gene ID" value="FBgn0086916"/>
</dbReference>
<dbReference type="GeneID" id="39492"/>
<dbReference type="KEGG" id="dme:Dmel_CG11281"/>
<dbReference type="UCSC" id="CG11281-RA">
    <property type="organism name" value="d. melanogaster"/>
</dbReference>
<dbReference type="AGR" id="FB:FBgn0086916"/>
<dbReference type="CTD" id="39492"/>
<dbReference type="FlyBase" id="FBgn0086916">
    <property type="gene designation" value="snky"/>
</dbReference>
<dbReference type="VEuPathDB" id="VectorBase:FBgn0086916"/>
<dbReference type="eggNOG" id="KOG3726">
    <property type="taxonomic scope" value="Eukaryota"/>
</dbReference>
<dbReference type="GeneTree" id="ENSGT00940000153269"/>
<dbReference type="HOGENOM" id="CLU_015030_1_1_1"/>
<dbReference type="InParanoid" id="Q9VU52"/>
<dbReference type="OMA" id="EHEVRFN"/>
<dbReference type="OrthoDB" id="5985669at2759"/>
<dbReference type="BioGRID-ORCS" id="39492">
    <property type="hits" value="0 hits in 1 CRISPR screen"/>
</dbReference>
<dbReference type="ChiTaRS" id="snky">
    <property type="organism name" value="fly"/>
</dbReference>
<dbReference type="GenomeRNAi" id="39492"/>
<dbReference type="PRO" id="PR:Q9VU52"/>
<dbReference type="Proteomes" id="UP000000803">
    <property type="component" value="Chromosome 3L"/>
</dbReference>
<dbReference type="Bgee" id="FBgn0086916">
    <property type="expression patterns" value="Expressed in male accessory gland main cell (Drosophila) in male reproductive gland and 10 other cell types or tissues"/>
</dbReference>
<dbReference type="GO" id="GO:0002080">
    <property type="term" value="C:acrosomal membrane"/>
    <property type="evidence" value="ECO:0007669"/>
    <property type="project" value="UniProtKB-SubCell"/>
</dbReference>
<dbReference type="GO" id="GO:0001669">
    <property type="term" value="C:acrosomal vesicle"/>
    <property type="evidence" value="ECO:0000314"/>
    <property type="project" value="FlyBase"/>
</dbReference>
<dbReference type="GO" id="GO:0061630">
    <property type="term" value="F:ubiquitin protein ligase activity"/>
    <property type="evidence" value="ECO:0000250"/>
    <property type="project" value="FlyBase"/>
</dbReference>
<dbReference type="GO" id="GO:0008270">
    <property type="term" value="F:zinc ion binding"/>
    <property type="evidence" value="ECO:0000255"/>
    <property type="project" value="FlyBase"/>
</dbReference>
<dbReference type="GO" id="GO:0035041">
    <property type="term" value="P:sperm DNA decondensation"/>
    <property type="evidence" value="ECO:0000315"/>
    <property type="project" value="FlyBase"/>
</dbReference>
<dbReference type="GO" id="GO:0035045">
    <property type="term" value="P:sperm plasma membrane disassembly"/>
    <property type="evidence" value="ECO:0000315"/>
    <property type="project" value="FlyBase"/>
</dbReference>
<dbReference type="InterPro" id="IPR051856">
    <property type="entry name" value="CSR-E3_Ligase_Protein"/>
</dbReference>
<dbReference type="InterPro" id="IPR012858">
    <property type="entry name" value="DC_STAMP-like"/>
</dbReference>
<dbReference type="PANTHER" id="PTHR21041">
    <property type="entry name" value="DENDRITIC CELL-SPECIFIC TRANSMEMBRANE PROTEIN"/>
    <property type="match status" value="1"/>
</dbReference>
<dbReference type="PANTHER" id="PTHR21041:SF17">
    <property type="entry name" value="E3 UBIQUITIN-PROTEIN LIGASE DCST1"/>
    <property type="match status" value="1"/>
</dbReference>
<dbReference type="Pfam" id="PF07782">
    <property type="entry name" value="DC_STAMP"/>
    <property type="match status" value="1"/>
</dbReference>
<organism evidence="9">
    <name type="scientific">Drosophila melanogaster</name>
    <name type="common">Fruit fly</name>
    <dbReference type="NCBI Taxonomy" id="7227"/>
    <lineage>
        <taxon>Eukaryota</taxon>
        <taxon>Metazoa</taxon>
        <taxon>Ecdysozoa</taxon>
        <taxon>Arthropoda</taxon>
        <taxon>Hexapoda</taxon>
        <taxon>Insecta</taxon>
        <taxon>Pterygota</taxon>
        <taxon>Neoptera</taxon>
        <taxon>Endopterygota</taxon>
        <taxon>Diptera</taxon>
        <taxon>Brachycera</taxon>
        <taxon>Muscomorpha</taxon>
        <taxon>Ephydroidea</taxon>
        <taxon>Drosophilidae</taxon>
        <taxon>Drosophila</taxon>
        <taxon>Sophophora</taxon>
    </lineage>
</organism>
<gene>
    <name evidence="5 8" type="primary">snky</name>
    <name evidence="8" type="ORF">CG11281</name>
</gene>
<comment type="function">
    <text evidence="3 4">Component of the sperm acrosome membrane (PubMed:17092953). Required for breakdown of the sperm plasma membrane after sperm entry into the egg, which is an essential prerequisite for successful fertilization (PubMed:17092953, PubMed:9630751).</text>
</comment>
<comment type="subcellular location">
    <subcellularLocation>
        <location evidence="3">Cytoplasmic vesicle</location>
        <location evidence="3">Secretory vesicle</location>
        <location evidence="3">Acrosome membrane</location>
        <topology evidence="1">Multi-pass membrane protein</topology>
    </subcellularLocation>
    <subcellularLocation>
        <location evidence="3">Cytoplasm</location>
    </subcellularLocation>
    <subcellularLocation>
        <location evidence="3">Cytoplasmic vesicle membrane</location>
        <topology evidence="1">Multi-pass membrane protein</topology>
    </subcellularLocation>
    <text evidence="3">Has diffuse cytoplasmic expression in primary spermatocytes. In post-meiotic spermatids, detected in clusters of vesicle-like structures adjacent to the nucleus. In late spermatids, a single vesicle-like spot is found near the nucleus, which probably corresponds to the acroblast. In mature sperm, localizes to the apical tip of the sperm head (acrosome).</text>
</comment>
<comment type="tissue specificity">
    <text evidence="3">Specifically expressed in testis.</text>
</comment>
<protein>
    <recommendedName>
        <fullName evidence="7">Protein sneaky</fullName>
    </recommendedName>
</protein>
<keyword id="KW-0963">Cytoplasm</keyword>
<keyword id="KW-0968">Cytoplasmic vesicle</keyword>
<keyword id="KW-0278">Fertilization</keyword>
<keyword id="KW-0472">Membrane</keyword>
<keyword id="KW-0479">Metal-binding</keyword>
<keyword id="KW-1185">Reference proteome</keyword>
<keyword id="KW-0812">Transmembrane</keyword>
<keyword id="KW-1133">Transmembrane helix</keyword>
<keyword id="KW-0862">Zinc</keyword>
<keyword id="KW-0863">Zinc-finger</keyword>
<accession>Q9VU52</accession>
<sequence length="715" mass="83340">MLSLLTRPFLPIFCFLYGPQSEGSTRIQCLRRFVTFLLGLVLGFLLWKLAALNFTLGRLFVNGATDLYVFIIFVLVTGTIFMLSLPVRAVILLIFVALVGKSGRTYLRAVAFAFIISGPIANLVENAGEVARVFVCTTVLTYNLSKTRFDLMAKPFTNTLKHMRGDVEEIRHTFYELQEVLVDLKYAVENSDIEDEKYGDKNTKPIYERWGRETSRMNVSEIGNGGKELPTPAAVQERFQRNMRNRCKHQLRSGHRACLEVFRNGYRKCTTNFPSMIAKAICWPYRVDIICELDLFGNPDKICDPSAVVPQNFGETYVELLKAEKKLFDNSSQIVVNYEIKDEQFAKSQLKSAERTGQAFKEDFERQKRIFNKVMGILQKILCLFMLRMVYVSINYYVKYLNDVEFDNFYITKYFKHVDQRRKEQRIDAILPLRTYEKSKYIDVDHIFSRTHHESTTVCFNLLQFLLELVTAGLFILIDHLVVELLQIVRKRSKIVYQQDGEHEVRFNISGVGQMARLLRTTMHNFNIHEKVSTSLSNKECLPNAHVLPKKMYYQLILLYLIIIVLIYQSTTFLRMRRVICSFFYYKREKQRILFLYNRILRNRLRSLEFLIHDAEDNLATHRIQQQVNVFLWLRFSCPVAFGWIRHFKFAKRTCMICRGLEDSTFTVCGNCGLPYCDDCAEDLNSVCFQCGVVLTRGAEGSESSVEVYTYRKEK</sequence>
<feature type="chain" id="PRO_0000445380" description="Protein sneaky">
    <location>
        <begin position="1"/>
        <end position="715"/>
    </location>
</feature>
<feature type="topological domain" description="Cytoplasmic" evidence="6">
    <location>
        <begin position="1"/>
        <end position="32"/>
    </location>
</feature>
<feature type="transmembrane region" description="Helical" evidence="1">
    <location>
        <begin position="33"/>
        <end position="53"/>
    </location>
</feature>
<feature type="topological domain" description="Extracellular" evidence="6">
    <location>
        <begin position="54"/>
        <end position="66"/>
    </location>
</feature>
<feature type="transmembrane region" description="Helical" evidence="1">
    <location>
        <begin position="67"/>
        <end position="87"/>
    </location>
</feature>
<feature type="topological domain" description="Cytoplasmic" evidence="6">
    <location>
        <begin position="88"/>
        <end position="109"/>
    </location>
</feature>
<feature type="transmembrane region" description="Helical" evidence="1">
    <location>
        <begin position="110"/>
        <end position="130"/>
    </location>
</feature>
<feature type="topological domain" description="Extracellular" evidence="6">
    <location>
        <begin position="131"/>
        <end position="373"/>
    </location>
</feature>
<feature type="transmembrane region" description="Helical" evidence="1">
    <location>
        <begin position="374"/>
        <end position="394"/>
    </location>
</feature>
<feature type="topological domain" description="Cytoplasmic" evidence="6">
    <location>
        <begin position="395"/>
        <end position="457"/>
    </location>
</feature>
<feature type="transmembrane region" description="Helical" evidence="1">
    <location>
        <begin position="458"/>
        <end position="478"/>
    </location>
</feature>
<feature type="topological domain" description="Extracellular" evidence="6">
    <location>
        <begin position="479"/>
        <end position="553"/>
    </location>
</feature>
<feature type="transmembrane region" description="Helical" evidence="1">
    <location>
        <begin position="554"/>
        <end position="574"/>
    </location>
</feature>
<feature type="topological domain" description="Cytoplasmic" evidence="6">
    <location>
        <begin position="575"/>
        <end position="715"/>
    </location>
</feature>
<feature type="zinc finger region" description="RING-type; degenerate" evidence="2">
    <location>
        <begin position="655"/>
        <end position="691"/>
    </location>
</feature>
<reference evidence="9" key="1">
    <citation type="journal article" date="2000" name="Science">
        <title>The genome sequence of Drosophila melanogaster.</title>
        <authorList>
            <person name="Adams M.D."/>
            <person name="Celniker S.E."/>
            <person name="Holt R.A."/>
            <person name="Evans C.A."/>
            <person name="Gocayne J.D."/>
            <person name="Amanatides P.G."/>
            <person name="Scherer S.E."/>
            <person name="Li P.W."/>
            <person name="Hoskins R.A."/>
            <person name="Galle R.F."/>
            <person name="George R.A."/>
            <person name="Lewis S.E."/>
            <person name="Richards S."/>
            <person name="Ashburner M."/>
            <person name="Henderson S.N."/>
            <person name="Sutton G.G."/>
            <person name="Wortman J.R."/>
            <person name="Yandell M.D."/>
            <person name="Zhang Q."/>
            <person name="Chen L.X."/>
            <person name="Brandon R.C."/>
            <person name="Rogers Y.-H.C."/>
            <person name="Blazej R.G."/>
            <person name="Champe M."/>
            <person name="Pfeiffer B.D."/>
            <person name="Wan K.H."/>
            <person name="Doyle C."/>
            <person name="Baxter E.G."/>
            <person name="Helt G."/>
            <person name="Nelson C.R."/>
            <person name="Miklos G.L.G."/>
            <person name="Abril J.F."/>
            <person name="Agbayani A."/>
            <person name="An H.-J."/>
            <person name="Andrews-Pfannkoch C."/>
            <person name="Baldwin D."/>
            <person name="Ballew R.M."/>
            <person name="Basu A."/>
            <person name="Baxendale J."/>
            <person name="Bayraktaroglu L."/>
            <person name="Beasley E.M."/>
            <person name="Beeson K.Y."/>
            <person name="Benos P.V."/>
            <person name="Berman B.P."/>
            <person name="Bhandari D."/>
            <person name="Bolshakov S."/>
            <person name="Borkova D."/>
            <person name="Botchan M.R."/>
            <person name="Bouck J."/>
            <person name="Brokstein P."/>
            <person name="Brottier P."/>
            <person name="Burtis K.C."/>
            <person name="Busam D.A."/>
            <person name="Butler H."/>
            <person name="Cadieu E."/>
            <person name="Center A."/>
            <person name="Chandra I."/>
            <person name="Cherry J.M."/>
            <person name="Cawley S."/>
            <person name="Dahlke C."/>
            <person name="Davenport L.B."/>
            <person name="Davies P."/>
            <person name="de Pablos B."/>
            <person name="Delcher A."/>
            <person name="Deng Z."/>
            <person name="Mays A.D."/>
            <person name="Dew I."/>
            <person name="Dietz S.M."/>
            <person name="Dodson K."/>
            <person name="Doup L.E."/>
            <person name="Downes M."/>
            <person name="Dugan-Rocha S."/>
            <person name="Dunkov B.C."/>
            <person name="Dunn P."/>
            <person name="Durbin K.J."/>
            <person name="Evangelista C.C."/>
            <person name="Ferraz C."/>
            <person name="Ferriera S."/>
            <person name="Fleischmann W."/>
            <person name="Fosler C."/>
            <person name="Gabrielian A.E."/>
            <person name="Garg N.S."/>
            <person name="Gelbart W.M."/>
            <person name="Glasser K."/>
            <person name="Glodek A."/>
            <person name="Gong F."/>
            <person name="Gorrell J.H."/>
            <person name="Gu Z."/>
            <person name="Guan P."/>
            <person name="Harris M."/>
            <person name="Harris N.L."/>
            <person name="Harvey D.A."/>
            <person name="Heiman T.J."/>
            <person name="Hernandez J.R."/>
            <person name="Houck J."/>
            <person name="Hostin D."/>
            <person name="Houston K.A."/>
            <person name="Howland T.J."/>
            <person name="Wei M.-H."/>
            <person name="Ibegwam C."/>
            <person name="Jalali M."/>
            <person name="Kalush F."/>
            <person name="Karpen G.H."/>
            <person name="Ke Z."/>
            <person name="Kennison J.A."/>
            <person name="Ketchum K.A."/>
            <person name="Kimmel B.E."/>
            <person name="Kodira C.D."/>
            <person name="Kraft C.L."/>
            <person name="Kravitz S."/>
            <person name="Kulp D."/>
            <person name="Lai Z."/>
            <person name="Lasko P."/>
            <person name="Lei Y."/>
            <person name="Levitsky A.A."/>
            <person name="Li J.H."/>
            <person name="Li Z."/>
            <person name="Liang Y."/>
            <person name="Lin X."/>
            <person name="Liu X."/>
            <person name="Mattei B."/>
            <person name="McIntosh T.C."/>
            <person name="McLeod M.P."/>
            <person name="McPherson D."/>
            <person name="Merkulov G."/>
            <person name="Milshina N.V."/>
            <person name="Mobarry C."/>
            <person name="Morris J."/>
            <person name="Moshrefi A."/>
            <person name="Mount S.M."/>
            <person name="Moy M."/>
            <person name="Murphy B."/>
            <person name="Murphy L."/>
            <person name="Muzny D.M."/>
            <person name="Nelson D.L."/>
            <person name="Nelson D.R."/>
            <person name="Nelson K.A."/>
            <person name="Nixon K."/>
            <person name="Nusskern D.R."/>
            <person name="Pacleb J.M."/>
            <person name="Palazzolo M."/>
            <person name="Pittman G.S."/>
            <person name="Pan S."/>
            <person name="Pollard J."/>
            <person name="Puri V."/>
            <person name="Reese M.G."/>
            <person name="Reinert K."/>
            <person name="Remington K."/>
            <person name="Saunders R.D.C."/>
            <person name="Scheeler F."/>
            <person name="Shen H."/>
            <person name="Shue B.C."/>
            <person name="Siden-Kiamos I."/>
            <person name="Simpson M."/>
            <person name="Skupski M.P."/>
            <person name="Smith T.J."/>
            <person name="Spier E."/>
            <person name="Spradling A.C."/>
            <person name="Stapleton M."/>
            <person name="Strong R."/>
            <person name="Sun E."/>
            <person name="Svirskas R."/>
            <person name="Tector C."/>
            <person name="Turner R."/>
            <person name="Venter E."/>
            <person name="Wang A.H."/>
            <person name="Wang X."/>
            <person name="Wang Z.-Y."/>
            <person name="Wassarman D.A."/>
            <person name="Weinstock G.M."/>
            <person name="Weissenbach J."/>
            <person name="Williams S.M."/>
            <person name="Woodage T."/>
            <person name="Worley K.C."/>
            <person name="Wu D."/>
            <person name="Yang S."/>
            <person name="Yao Q.A."/>
            <person name="Ye J."/>
            <person name="Yeh R.-F."/>
            <person name="Zaveri J.S."/>
            <person name="Zhan M."/>
            <person name="Zhang G."/>
            <person name="Zhao Q."/>
            <person name="Zheng L."/>
            <person name="Zheng X.H."/>
            <person name="Zhong F.N."/>
            <person name="Zhong W."/>
            <person name="Zhou X."/>
            <person name="Zhu S.C."/>
            <person name="Zhu X."/>
            <person name="Smith H.O."/>
            <person name="Gibbs R.A."/>
            <person name="Myers E.W."/>
            <person name="Rubin G.M."/>
            <person name="Venter J.C."/>
        </authorList>
    </citation>
    <scope>NUCLEOTIDE SEQUENCE [LARGE SCALE GENOMIC DNA]</scope>
    <source>
        <strain evidence="9">Berkeley</strain>
    </source>
</reference>
<reference evidence="9" key="2">
    <citation type="journal article" date="2002" name="Genome Biol.">
        <title>Annotation of the Drosophila melanogaster euchromatic genome: a systematic review.</title>
        <authorList>
            <person name="Misra S."/>
            <person name="Crosby M.A."/>
            <person name="Mungall C.J."/>
            <person name="Matthews B.B."/>
            <person name="Campbell K.S."/>
            <person name="Hradecky P."/>
            <person name="Huang Y."/>
            <person name="Kaminker J.S."/>
            <person name="Millburn G.H."/>
            <person name="Prochnik S.E."/>
            <person name="Smith C.D."/>
            <person name="Tupy J.L."/>
            <person name="Whitfield E.J."/>
            <person name="Bayraktaroglu L."/>
            <person name="Berman B.P."/>
            <person name="Bettencourt B.R."/>
            <person name="Celniker S.E."/>
            <person name="de Grey A.D.N.J."/>
            <person name="Drysdale R.A."/>
            <person name="Harris N.L."/>
            <person name="Richter J."/>
            <person name="Russo S."/>
            <person name="Schroeder A.J."/>
            <person name="Shu S.Q."/>
            <person name="Stapleton M."/>
            <person name="Yamada C."/>
            <person name="Ashburner M."/>
            <person name="Gelbart W.M."/>
            <person name="Rubin G.M."/>
            <person name="Lewis S.E."/>
        </authorList>
    </citation>
    <scope>GENOME REANNOTATION</scope>
    <source>
        <strain evidence="9">Berkeley</strain>
    </source>
</reference>
<reference evidence="6" key="3">
    <citation type="journal article" date="1998" name="Dev. Biol.">
        <title>The paternal effect gene ms(3)sneaky is required for sperm activation and the initiation of embryogenesis in Drosophila melanogaster.</title>
        <authorList>
            <person name="Fitch K.R."/>
            <person name="Wakimoto B.T."/>
        </authorList>
    </citation>
    <scope>FUNCTION</scope>
</reference>
<reference evidence="6" key="4">
    <citation type="journal article" date="2006" name="Development">
        <title>Sperm plasma membrane breakdown during Drosophila fertilization requires sneaky, an acrosomal membrane protein.</title>
        <authorList>
            <person name="Wilson K.L."/>
            <person name="Fitch K.R."/>
            <person name="Bafus B.T."/>
            <person name="Wakimoto B.T."/>
        </authorList>
    </citation>
    <scope>FUNCTION</scope>
    <scope>SUBCELLULAR LOCATION</scope>
    <scope>TISSUE SPECIFICITY</scope>
</reference>
<proteinExistence type="evidence at transcript level"/>
<name>SNKY_DROME</name>